<name>ARNE_ECODH</name>
<proteinExistence type="inferred from homology"/>
<protein>
    <recommendedName>
        <fullName evidence="2">Probable 4-amino-4-deoxy-L-arabinose-phosphoundecaprenol flippase subunit ArnE</fullName>
        <shortName evidence="2">L-Ara4N-phosphoundecaprenol flippase subunit ArnE</shortName>
    </recommendedName>
    <alternativeName>
        <fullName evidence="2">Undecaprenyl phosphate-aminoarabinose flippase subunit ArnE</fullName>
    </alternativeName>
</protein>
<evidence type="ECO:0000255" key="1"/>
<evidence type="ECO:0000255" key="2">
    <source>
        <dbReference type="HAMAP-Rule" id="MF_01869"/>
    </source>
</evidence>
<feature type="chain" id="PRO_0000382958" description="Probable 4-amino-4-deoxy-L-arabinose-phosphoundecaprenol flippase subunit ArnE">
    <location>
        <begin position="1"/>
        <end position="111"/>
    </location>
</feature>
<feature type="topological domain" description="Cytoplasmic" evidence="1">
    <location>
        <begin position="1"/>
        <end position="35"/>
    </location>
</feature>
<feature type="transmembrane region" description="Helical" evidence="2">
    <location>
        <begin position="36"/>
        <end position="56"/>
    </location>
</feature>
<feature type="topological domain" description="Periplasmic" evidence="1">
    <location>
        <begin position="57"/>
        <end position="60"/>
    </location>
</feature>
<feature type="transmembrane region" description="Helical" evidence="2">
    <location>
        <begin position="61"/>
        <end position="81"/>
    </location>
</feature>
<feature type="topological domain" description="Cytoplasmic" evidence="1">
    <location>
        <begin position="82"/>
        <end position="87"/>
    </location>
</feature>
<feature type="transmembrane region" description="Helical" evidence="2">
    <location>
        <begin position="88"/>
        <end position="108"/>
    </location>
</feature>
<feature type="topological domain" description="Periplasmic" evidence="1">
    <location>
        <begin position="109"/>
        <end position="111"/>
    </location>
</feature>
<feature type="domain" description="EamA" evidence="2">
    <location>
        <begin position="40"/>
        <end position="109"/>
    </location>
</feature>
<keyword id="KW-0997">Cell inner membrane</keyword>
<keyword id="KW-1003">Cell membrane</keyword>
<keyword id="KW-0441">Lipid A biosynthesis</keyword>
<keyword id="KW-0444">Lipid biosynthesis</keyword>
<keyword id="KW-0443">Lipid metabolism</keyword>
<keyword id="KW-0448">Lipopolysaccharide biosynthesis</keyword>
<keyword id="KW-0472">Membrane</keyword>
<keyword id="KW-0812">Transmembrane</keyword>
<keyword id="KW-1133">Transmembrane helix</keyword>
<keyword id="KW-0813">Transport</keyword>
<accession>B1X8X1</accession>
<reference key="1">
    <citation type="journal article" date="2008" name="J. Bacteriol.">
        <title>The complete genome sequence of Escherichia coli DH10B: insights into the biology of a laboratory workhorse.</title>
        <authorList>
            <person name="Durfee T."/>
            <person name="Nelson R."/>
            <person name="Baldwin S."/>
            <person name="Plunkett G. III"/>
            <person name="Burland V."/>
            <person name="Mau B."/>
            <person name="Petrosino J.F."/>
            <person name="Qin X."/>
            <person name="Muzny D.M."/>
            <person name="Ayele M."/>
            <person name="Gibbs R.A."/>
            <person name="Csorgo B."/>
            <person name="Posfai G."/>
            <person name="Weinstock G.M."/>
            <person name="Blattner F.R."/>
        </authorList>
    </citation>
    <scope>NUCLEOTIDE SEQUENCE [LARGE SCALE GENOMIC DNA]</scope>
    <source>
        <strain>K12 / DH10B</strain>
    </source>
</reference>
<organism>
    <name type="scientific">Escherichia coli (strain K12 / DH10B)</name>
    <dbReference type="NCBI Taxonomy" id="316385"/>
    <lineage>
        <taxon>Bacteria</taxon>
        <taxon>Pseudomonadati</taxon>
        <taxon>Pseudomonadota</taxon>
        <taxon>Gammaproteobacteria</taxon>
        <taxon>Enterobacterales</taxon>
        <taxon>Enterobacteriaceae</taxon>
        <taxon>Escherichia</taxon>
    </lineage>
</organism>
<gene>
    <name evidence="2" type="primary">arnE</name>
    <name type="ordered locus">ECDH10B_2418</name>
</gene>
<sequence>MIWLTLVFASLLSVAGQLCQKQATCFVAINKRRKHIVLWLGLALACLGLAMVLWLLVLQNVPVGIAYPMLSLNFVWVTLAAVKLWHEPVSPRHWCGVAFIIGGIVILGSTV</sequence>
<dbReference type="EMBL" id="CP000948">
    <property type="protein sequence ID" value="ACB03418.1"/>
    <property type="molecule type" value="Genomic_DNA"/>
</dbReference>
<dbReference type="RefSeq" id="WP_000638031.1">
    <property type="nucleotide sequence ID" value="NC_010473.1"/>
</dbReference>
<dbReference type="SMR" id="B1X8X1"/>
<dbReference type="GeneID" id="93774916"/>
<dbReference type="KEGG" id="ecd:ECDH10B_2418"/>
<dbReference type="HOGENOM" id="CLU_131462_5_1_6"/>
<dbReference type="UniPathway" id="UPA00030"/>
<dbReference type="GO" id="GO:0005886">
    <property type="term" value="C:plasma membrane"/>
    <property type="evidence" value="ECO:0007669"/>
    <property type="project" value="UniProtKB-SubCell"/>
</dbReference>
<dbReference type="GO" id="GO:1901505">
    <property type="term" value="F:carbohydrate derivative transmembrane transporter activity"/>
    <property type="evidence" value="ECO:0007669"/>
    <property type="project" value="InterPro"/>
</dbReference>
<dbReference type="GO" id="GO:0009245">
    <property type="term" value="P:lipid A biosynthetic process"/>
    <property type="evidence" value="ECO:0007669"/>
    <property type="project" value="UniProtKB-UniRule"/>
</dbReference>
<dbReference type="GO" id="GO:0009103">
    <property type="term" value="P:lipopolysaccharide biosynthetic process"/>
    <property type="evidence" value="ECO:0007669"/>
    <property type="project" value="UniProtKB-UniRule"/>
</dbReference>
<dbReference type="FunFam" id="1.10.3730.20:FF:000002">
    <property type="entry name" value="Probable 4-amino-4-deoxy-L-arabinose-phosphoundecaprenol flippase subunit ArnE"/>
    <property type="match status" value="1"/>
</dbReference>
<dbReference type="Gene3D" id="1.10.3730.20">
    <property type="match status" value="1"/>
</dbReference>
<dbReference type="HAMAP" id="MF_01869">
    <property type="entry name" value="Flippase_ArnE"/>
    <property type="match status" value="1"/>
</dbReference>
<dbReference type="InterPro" id="IPR000620">
    <property type="entry name" value="EamA_dom"/>
</dbReference>
<dbReference type="InterPro" id="IPR022883">
    <property type="entry name" value="Flippase_ArnE"/>
</dbReference>
<dbReference type="InterPro" id="IPR000390">
    <property type="entry name" value="Small_drug/metabolite_transptr"/>
</dbReference>
<dbReference type="NCBIfam" id="NF011625">
    <property type="entry name" value="PRK15051.1"/>
    <property type="match status" value="1"/>
</dbReference>
<dbReference type="PANTHER" id="PTHR30561:SF23">
    <property type="entry name" value="4-AMINO-4-DEOXY-L-ARABINOSE-PHOSPHOUNDECAPRENOL FLIPPASE SUBUNIT ARNE-RELATED"/>
    <property type="match status" value="1"/>
</dbReference>
<dbReference type="PANTHER" id="PTHR30561">
    <property type="entry name" value="SMR FAMILY PROTON-DEPENDENT DRUG EFFLUX TRANSPORTER SUGE"/>
    <property type="match status" value="1"/>
</dbReference>
<dbReference type="Pfam" id="PF00892">
    <property type="entry name" value="EamA"/>
    <property type="match status" value="1"/>
</dbReference>
<dbReference type="SUPFAM" id="SSF103481">
    <property type="entry name" value="Multidrug resistance efflux transporter EmrE"/>
    <property type="match status" value="1"/>
</dbReference>
<comment type="function">
    <text evidence="2">Translocates 4-amino-4-deoxy-L-arabinose-phosphoundecaprenol (alpha-L-Ara4N-phosphoundecaprenol) from the cytoplasmic to the periplasmic side of the inner membrane.</text>
</comment>
<comment type="pathway">
    <text evidence="2">Bacterial outer membrane biogenesis; lipopolysaccharide biosynthesis.</text>
</comment>
<comment type="subunit">
    <text evidence="2">Heterodimer of ArnE and ArnF.</text>
</comment>
<comment type="subcellular location">
    <subcellularLocation>
        <location evidence="2">Cell inner membrane</location>
        <topology evidence="2">Multi-pass membrane protein</topology>
    </subcellularLocation>
</comment>
<comment type="similarity">
    <text evidence="2">Belongs to the ArnE family.</text>
</comment>